<protein>
    <recommendedName>
        <fullName evidence="1">Glutamyl-tRNA reductase</fullName>
        <shortName evidence="1">GluTR</shortName>
        <ecNumber evidence="1">1.2.1.70</ecNumber>
    </recommendedName>
</protein>
<reference key="1">
    <citation type="journal article" date="2008" name="PLoS Genet.">
        <title>Complete genome sequence of the complex carbohydrate-degrading marine bacterium, Saccharophagus degradans strain 2-40 T.</title>
        <authorList>
            <person name="Weiner R.M."/>
            <person name="Taylor L.E. II"/>
            <person name="Henrissat B."/>
            <person name="Hauser L."/>
            <person name="Land M."/>
            <person name="Coutinho P.M."/>
            <person name="Rancurel C."/>
            <person name="Saunders E.H."/>
            <person name="Longmire A.G."/>
            <person name="Zhang H."/>
            <person name="Bayer E.A."/>
            <person name="Gilbert H.J."/>
            <person name="Larimer F."/>
            <person name="Zhulin I.B."/>
            <person name="Ekborg N.A."/>
            <person name="Lamed R."/>
            <person name="Richardson P.M."/>
            <person name="Borovok I."/>
            <person name="Hutcheson S."/>
        </authorList>
    </citation>
    <scope>NUCLEOTIDE SEQUENCE [LARGE SCALE GENOMIC DNA]</scope>
    <source>
        <strain>2-40 / ATCC 43961 / DSM 17024</strain>
    </source>
</reference>
<feature type="chain" id="PRO_1000004681" description="Glutamyl-tRNA reductase">
    <location>
        <begin position="1"/>
        <end position="425"/>
    </location>
</feature>
<feature type="active site" description="Nucleophile" evidence="1">
    <location>
        <position position="50"/>
    </location>
</feature>
<feature type="binding site" evidence="1">
    <location>
        <begin position="49"/>
        <end position="52"/>
    </location>
    <ligand>
        <name>substrate</name>
    </ligand>
</feature>
<feature type="binding site" evidence="1">
    <location>
        <position position="106"/>
    </location>
    <ligand>
        <name>substrate</name>
    </ligand>
</feature>
<feature type="binding site" evidence="1">
    <location>
        <begin position="111"/>
        <end position="113"/>
    </location>
    <ligand>
        <name>substrate</name>
    </ligand>
</feature>
<feature type="binding site" evidence="1">
    <location>
        <position position="117"/>
    </location>
    <ligand>
        <name>substrate</name>
    </ligand>
</feature>
<feature type="binding site" evidence="1">
    <location>
        <begin position="186"/>
        <end position="191"/>
    </location>
    <ligand>
        <name>NADP(+)</name>
        <dbReference type="ChEBI" id="CHEBI:58349"/>
    </ligand>
</feature>
<feature type="site" description="Important for activity" evidence="1">
    <location>
        <position position="96"/>
    </location>
</feature>
<keyword id="KW-0521">NADP</keyword>
<keyword id="KW-0560">Oxidoreductase</keyword>
<keyword id="KW-0627">Porphyrin biosynthesis</keyword>
<keyword id="KW-1185">Reference proteome</keyword>
<sequence length="425" mass="46361">MTLIALGINHNTASLDVREKVAFSSTQIESALRAAIAGAGLSEVAILSTCNRTELYAYGSSQANSLIQWLAEYKQVNVAELEQSHYLYTASEAASHMMKVASGLDSLVLGEPQILGQMKSAYAVAREAGVLGGHLHDVFQRVFSVAKRVRSETAIGENPVSVAYAAVSLAQQIFSDLKQDTALLIGAGETIELVARHLAEQGIKKLIVANRTLGNARSLAEQFGAEAILLADIPEHLHRADIVISSTASQLPLLGKGAVEQALKRRRHKPMFMVDIAVPRDIEAQVGDLADVYLYTVDDLKEVIDENMRSRQQAAKIAEEIIVEGLLHYEREQRALTSVDTIKALRQTMDALREQELEKSRKALEAGADPAQVLEQLARSLTNKFLHTPSTQLKQAGADGEQDMLRTVRTLFSLPSANESKSEKE</sequence>
<dbReference type="EC" id="1.2.1.70" evidence="1"/>
<dbReference type="EMBL" id="CP000282">
    <property type="protein sequence ID" value="ABD82507.1"/>
    <property type="molecule type" value="Genomic_DNA"/>
</dbReference>
<dbReference type="RefSeq" id="WP_011469723.1">
    <property type="nucleotide sequence ID" value="NC_007912.1"/>
</dbReference>
<dbReference type="SMR" id="Q21FM2"/>
<dbReference type="STRING" id="203122.Sde_3252"/>
<dbReference type="GeneID" id="98614873"/>
<dbReference type="KEGG" id="sde:Sde_3252"/>
<dbReference type="eggNOG" id="COG0373">
    <property type="taxonomic scope" value="Bacteria"/>
</dbReference>
<dbReference type="HOGENOM" id="CLU_035113_2_2_6"/>
<dbReference type="OrthoDB" id="110209at2"/>
<dbReference type="UniPathway" id="UPA00251">
    <property type="reaction ID" value="UER00316"/>
</dbReference>
<dbReference type="Proteomes" id="UP000001947">
    <property type="component" value="Chromosome"/>
</dbReference>
<dbReference type="GO" id="GO:0008883">
    <property type="term" value="F:glutamyl-tRNA reductase activity"/>
    <property type="evidence" value="ECO:0007669"/>
    <property type="project" value="UniProtKB-UniRule"/>
</dbReference>
<dbReference type="GO" id="GO:0050661">
    <property type="term" value="F:NADP binding"/>
    <property type="evidence" value="ECO:0007669"/>
    <property type="project" value="InterPro"/>
</dbReference>
<dbReference type="GO" id="GO:0019353">
    <property type="term" value="P:protoporphyrinogen IX biosynthetic process from glutamate"/>
    <property type="evidence" value="ECO:0007669"/>
    <property type="project" value="TreeGrafter"/>
</dbReference>
<dbReference type="CDD" id="cd05213">
    <property type="entry name" value="NAD_bind_Glutamyl_tRNA_reduct"/>
    <property type="match status" value="1"/>
</dbReference>
<dbReference type="FunFam" id="3.30.460.30:FF:000001">
    <property type="entry name" value="Glutamyl-tRNA reductase"/>
    <property type="match status" value="1"/>
</dbReference>
<dbReference type="FunFam" id="3.40.50.720:FF:000031">
    <property type="entry name" value="Glutamyl-tRNA reductase"/>
    <property type="match status" value="1"/>
</dbReference>
<dbReference type="Gene3D" id="3.30.460.30">
    <property type="entry name" value="Glutamyl-tRNA reductase, N-terminal domain"/>
    <property type="match status" value="1"/>
</dbReference>
<dbReference type="Gene3D" id="3.40.50.720">
    <property type="entry name" value="NAD(P)-binding Rossmann-like Domain"/>
    <property type="match status" value="1"/>
</dbReference>
<dbReference type="HAMAP" id="MF_00087">
    <property type="entry name" value="Glu_tRNA_reductase"/>
    <property type="match status" value="1"/>
</dbReference>
<dbReference type="InterPro" id="IPR000343">
    <property type="entry name" value="4pyrrol_synth_GluRdtase"/>
</dbReference>
<dbReference type="InterPro" id="IPR015896">
    <property type="entry name" value="4pyrrol_synth_GluRdtase_dimer"/>
</dbReference>
<dbReference type="InterPro" id="IPR015895">
    <property type="entry name" value="4pyrrol_synth_GluRdtase_N"/>
</dbReference>
<dbReference type="InterPro" id="IPR018214">
    <property type="entry name" value="GluRdtase_CS"/>
</dbReference>
<dbReference type="InterPro" id="IPR036453">
    <property type="entry name" value="GluRdtase_dimer_dom_sf"/>
</dbReference>
<dbReference type="InterPro" id="IPR036343">
    <property type="entry name" value="GluRdtase_N_sf"/>
</dbReference>
<dbReference type="InterPro" id="IPR036291">
    <property type="entry name" value="NAD(P)-bd_dom_sf"/>
</dbReference>
<dbReference type="InterPro" id="IPR006151">
    <property type="entry name" value="Shikm_DH/Glu-tRNA_Rdtase"/>
</dbReference>
<dbReference type="NCBIfam" id="TIGR01035">
    <property type="entry name" value="hemA"/>
    <property type="match status" value="1"/>
</dbReference>
<dbReference type="PANTHER" id="PTHR43013">
    <property type="entry name" value="GLUTAMYL-TRNA REDUCTASE"/>
    <property type="match status" value="1"/>
</dbReference>
<dbReference type="PANTHER" id="PTHR43013:SF1">
    <property type="entry name" value="GLUTAMYL-TRNA REDUCTASE"/>
    <property type="match status" value="1"/>
</dbReference>
<dbReference type="Pfam" id="PF00745">
    <property type="entry name" value="GlutR_dimer"/>
    <property type="match status" value="1"/>
</dbReference>
<dbReference type="Pfam" id="PF05201">
    <property type="entry name" value="GlutR_N"/>
    <property type="match status" value="1"/>
</dbReference>
<dbReference type="Pfam" id="PF01488">
    <property type="entry name" value="Shikimate_DH"/>
    <property type="match status" value="1"/>
</dbReference>
<dbReference type="PIRSF" id="PIRSF000445">
    <property type="entry name" value="4pyrrol_synth_GluRdtase"/>
    <property type="match status" value="1"/>
</dbReference>
<dbReference type="SUPFAM" id="SSF69742">
    <property type="entry name" value="Glutamyl tRNA-reductase catalytic, N-terminal domain"/>
    <property type="match status" value="1"/>
</dbReference>
<dbReference type="SUPFAM" id="SSF69075">
    <property type="entry name" value="Glutamyl tRNA-reductase dimerization domain"/>
    <property type="match status" value="1"/>
</dbReference>
<dbReference type="SUPFAM" id="SSF51735">
    <property type="entry name" value="NAD(P)-binding Rossmann-fold domains"/>
    <property type="match status" value="1"/>
</dbReference>
<dbReference type="PROSITE" id="PS00747">
    <property type="entry name" value="GLUTR"/>
    <property type="match status" value="1"/>
</dbReference>
<organism>
    <name type="scientific">Saccharophagus degradans (strain 2-40 / ATCC 43961 / DSM 17024)</name>
    <dbReference type="NCBI Taxonomy" id="203122"/>
    <lineage>
        <taxon>Bacteria</taxon>
        <taxon>Pseudomonadati</taxon>
        <taxon>Pseudomonadota</taxon>
        <taxon>Gammaproteobacteria</taxon>
        <taxon>Cellvibrionales</taxon>
        <taxon>Cellvibrionaceae</taxon>
        <taxon>Saccharophagus</taxon>
    </lineage>
</organism>
<gene>
    <name evidence="1" type="primary">hemA</name>
    <name type="ordered locus">Sde_3252</name>
</gene>
<proteinExistence type="inferred from homology"/>
<name>HEM1_SACD2</name>
<comment type="function">
    <text evidence="1">Catalyzes the NADPH-dependent reduction of glutamyl-tRNA(Glu) to glutamate 1-semialdehyde (GSA).</text>
</comment>
<comment type="catalytic activity">
    <reaction evidence="1">
        <text>(S)-4-amino-5-oxopentanoate + tRNA(Glu) + NADP(+) = L-glutamyl-tRNA(Glu) + NADPH + H(+)</text>
        <dbReference type="Rhea" id="RHEA:12344"/>
        <dbReference type="Rhea" id="RHEA-COMP:9663"/>
        <dbReference type="Rhea" id="RHEA-COMP:9680"/>
        <dbReference type="ChEBI" id="CHEBI:15378"/>
        <dbReference type="ChEBI" id="CHEBI:57501"/>
        <dbReference type="ChEBI" id="CHEBI:57783"/>
        <dbReference type="ChEBI" id="CHEBI:58349"/>
        <dbReference type="ChEBI" id="CHEBI:78442"/>
        <dbReference type="ChEBI" id="CHEBI:78520"/>
        <dbReference type="EC" id="1.2.1.70"/>
    </reaction>
</comment>
<comment type="pathway">
    <text evidence="1">Porphyrin-containing compound metabolism; protoporphyrin-IX biosynthesis; 5-aminolevulinate from L-glutamyl-tRNA(Glu): step 1/2.</text>
</comment>
<comment type="subunit">
    <text evidence="1">Homodimer.</text>
</comment>
<comment type="domain">
    <text evidence="1">Possesses an unusual extended V-shaped dimeric structure with each monomer consisting of three distinct domains arranged along a curved 'spinal' alpha-helix. The N-terminal catalytic domain specifically recognizes the glutamate moiety of the substrate. The second domain is the NADPH-binding domain, and the third C-terminal domain is responsible for dimerization.</text>
</comment>
<comment type="miscellaneous">
    <text evidence="1">During catalysis, the active site Cys acts as a nucleophile attacking the alpha-carbonyl group of tRNA-bound glutamate with the formation of a thioester intermediate between enzyme and glutamate, and the concomitant release of tRNA(Glu). The thioester intermediate is finally reduced by direct hydride transfer from NADPH, to form the product GSA.</text>
</comment>
<comment type="similarity">
    <text evidence="1">Belongs to the glutamyl-tRNA reductase family.</text>
</comment>
<accession>Q21FM2</accession>
<evidence type="ECO:0000255" key="1">
    <source>
        <dbReference type="HAMAP-Rule" id="MF_00087"/>
    </source>
</evidence>